<feature type="chain" id="PRO_0000312958" description="Mediator of RNA polymerase II transcription subunit 12">
    <location>
        <begin position="1"/>
        <end position="2027"/>
    </location>
</feature>
<feature type="region of interest" description="Disordered" evidence="4">
    <location>
        <begin position="170"/>
        <end position="191"/>
    </location>
</feature>
<feature type="region of interest" description="Disordered" evidence="4">
    <location>
        <begin position="474"/>
        <end position="516"/>
    </location>
</feature>
<feature type="region of interest" description="Disordered" evidence="4">
    <location>
        <begin position="538"/>
        <end position="563"/>
    </location>
</feature>
<feature type="region of interest" description="Disordered" evidence="4">
    <location>
        <begin position="1088"/>
        <end position="1113"/>
    </location>
</feature>
<feature type="region of interest" description="Disordered" evidence="4">
    <location>
        <begin position="1241"/>
        <end position="1262"/>
    </location>
</feature>
<feature type="region of interest" description="Disordered" evidence="4">
    <location>
        <begin position="1297"/>
        <end position="1321"/>
    </location>
</feature>
<feature type="region of interest" description="Interaction with CTNNB1 and GLI3" evidence="1">
    <location>
        <begin position="1463"/>
        <end position="1901"/>
    </location>
</feature>
<feature type="region of interest" description="Disordered" evidence="4">
    <location>
        <begin position="1585"/>
        <end position="1676"/>
    </location>
</feature>
<feature type="region of interest" description="Disordered" evidence="4">
    <location>
        <begin position="1805"/>
        <end position="1848"/>
    </location>
</feature>
<feature type="region of interest" description="Disordered" evidence="4">
    <location>
        <begin position="1965"/>
        <end position="1999"/>
    </location>
</feature>
<feature type="region of interest" description="Disordered" evidence="4">
    <location>
        <begin position="2008"/>
        <end position="2027"/>
    </location>
</feature>
<feature type="compositionally biased region" description="Basic and acidic residues" evidence="4">
    <location>
        <begin position="549"/>
        <end position="563"/>
    </location>
</feature>
<feature type="compositionally biased region" description="Low complexity" evidence="4">
    <location>
        <begin position="1241"/>
        <end position="1258"/>
    </location>
</feature>
<feature type="compositionally biased region" description="Basic and acidic residues" evidence="4">
    <location>
        <begin position="1297"/>
        <end position="1316"/>
    </location>
</feature>
<feature type="compositionally biased region" description="Basic and acidic residues" evidence="4">
    <location>
        <begin position="1605"/>
        <end position="1618"/>
    </location>
</feature>
<feature type="compositionally biased region" description="Basic residues" evidence="4">
    <location>
        <begin position="1631"/>
        <end position="1640"/>
    </location>
</feature>
<feature type="compositionally biased region" description="Low complexity" evidence="4">
    <location>
        <begin position="1815"/>
        <end position="1830"/>
    </location>
</feature>
<feature type="compositionally biased region" description="Low complexity" evidence="4">
    <location>
        <begin position="1965"/>
        <end position="1975"/>
    </location>
</feature>
<feature type="compositionally biased region" description="Low complexity" evidence="4">
    <location>
        <begin position="1983"/>
        <end position="1999"/>
    </location>
</feature>
<feature type="compositionally biased region" description="Low complexity" evidence="4">
    <location>
        <begin position="2008"/>
        <end position="2021"/>
    </location>
</feature>
<feature type="modified residue" description="Phosphotyrosine" evidence="3">
    <location>
        <position position="13"/>
    </location>
</feature>
<feature type="modified residue" description="Phosphoserine" evidence="3">
    <location>
        <position position="482"/>
    </location>
</feature>
<feature type="modified residue" description="Phosphoserine" evidence="3">
    <location>
        <position position="512"/>
    </location>
</feature>
<feature type="modified residue" description="Phosphoserine" evidence="3">
    <location>
        <position position="545"/>
    </location>
</feature>
<feature type="modified residue" description="Phosphoserine" evidence="3">
    <location>
        <position position="547"/>
    </location>
</feature>
<feature type="modified residue" description="Phosphoserine" evidence="3">
    <location>
        <position position="1105"/>
    </location>
</feature>
<feature type="modified residue" description="Phosphoserine" evidence="3">
    <location>
        <position position="1116"/>
    </location>
</feature>
<feature type="modified residue" description="N6-acetyllysine" evidence="2">
    <location>
        <position position="1645"/>
    </location>
</feature>
<feature type="modified residue" description="Asymmetric dimethylarginine; alternate" evidence="2">
    <location>
        <position position="1746"/>
    </location>
</feature>
<feature type="modified residue" description="Omega-N-methylarginine; alternate" evidence="2">
    <location>
        <position position="1746"/>
    </location>
</feature>
<feature type="modified residue" description="Omega-N-methylarginine" evidence="2">
    <location>
        <position position="1757"/>
    </location>
</feature>
<feature type="modified residue" description="Asymmetric dimethylarginine" evidence="3">
    <location>
        <position position="1844"/>
    </location>
</feature>
<feature type="modified residue" description="Asymmetric dimethylarginine" evidence="3">
    <location>
        <position position="1865"/>
    </location>
</feature>
<comment type="function">
    <text evidence="1">Component of the Mediator complex, a coactivator involved in the regulated transcription of nearly all RNA polymerase II-dependent genes. Mediator functions as a bridge to convey information from gene-specific regulatory proteins to the basal RNA polymerase II transcription machinery. Mediator is recruited to promoters by direct interactions with regulatory proteins and serves as a scaffold for the assembly of a functional preinitiation complex with RNA polymerase II and the general transcription factors. This subunit may specifically regulate transcription of targets of the Wnt signaling pathway and SHH signaling pathway (By similarity).</text>
</comment>
<comment type="subunit">
    <text evidence="1">Component of the Mediator complex, which is composed of MED1, MED4, MED6, MED7, MED8, MED9, MED10, MED11, MED12, MED13, MED13L, MED14, MED15, MED16, MED17, MED18, MED19, MED20, MED21, MED22, MED23, MED24, MED25, MED26, MED27, MED29, MED30, MED31, CCNC, CDK8 and CDC2L6/CDK11. The MED12, MED13, CCNC and CDK8 subunits form a distinct module termed the CDK8 module. Mediator containing the CDK8 module is less active than Mediator lacking this module in supporting transcriptional activation. Individual preparations of the Mediator complex lacking one or more distinct subunits have been variously termed ARC, CRSP, DRIP, PC2, SMCC and TRAP. Also interacts with CTNNB1 and GLI3 (By similarity).</text>
</comment>
<comment type="subcellular location">
    <subcellularLocation>
        <location evidence="5">Nucleus</location>
    </subcellularLocation>
</comment>
<comment type="similarity">
    <text evidence="5">Belongs to the Mediator complex subunit 12 family.</text>
</comment>
<dbReference type="EMBL" id="AB102669">
    <property type="protein sequence ID" value="BAC81138.1"/>
    <property type="molecule type" value="mRNA"/>
</dbReference>
<dbReference type="RefSeq" id="NP_001009019.1">
    <property type="nucleotide sequence ID" value="NM_001009019.1"/>
</dbReference>
<dbReference type="SMR" id="Q7YQK8"/>
<dbReference type="STRING" id="9598.ENSPTRP00000085333"/>
<dbReference type="PaxDb" id="9598-ENSPTRP00000047374"/>
<dbReference type="GeneID" id="449626"/>
<dbReference type="KEGG" id="ptr:449626"/>
<dbReference type="CTD" id="9968"/>
<dbReference type="eggNOG" id="KOG3598">
    <property type="taxonomic scope" value="Eukaryota"/>
</dbReference>
<dbReference type="InParanoid" id="Q7YQK8"/>
<dbReference type="Proteomes" id="UP000002277">
    <property type="component" value="Unplaced"/>
</dbReference>
<dbReference type="GO" id="GO:0016592">
    <property type="term" value="C:mediator complex"/>
    <property type="evidence" value="ECO:0000318"/>
    <property type="project" value="GO_Central"/>
</dbReference>
<dbReference type="GO" id="GO:0008013">
    <property type="term" value="F:beta-catenin binding"/>
    <property type="evidence" value="ECO:0007669"/>
    <property type="project" value="InterPro"/>
</dbReference>
<dbReference type="GO" id="GO:0003713">
    <property type="term" value="F:transcription coactivator activity"/>
    <property type="evidence" value="ECO:0000318"/>
    <property type="project" value="GO_Central"/>
</dbReference>
<dbReference type="GO" id="GO:0045944">
    <property type="term" value="P:positive regulation of transcription by RNA polymerase II"/>
    <property type="evidence" value="ECO:0000318"/>
    <property type="project" value="GO_Central"/>
</dbReference>
<dbReference type="InterPro" id="IPR051647">
    <property type="entry name" value="Mediator_comp_sub12"/>
</dbReference>
<dbReference type="InterPro" id="IPR021989">
    <property type="entry name" value="Mediator_Med12_catenin-bd"/>
</dbReference>
<dbReference type="InterPro" id="IPR021990">
    <property type="entry name" value="Mediator_Med12_LCEWAV"/>
</dbReference>
<dbReference type="PANTHER" id="PTHR46007">
    <property type="entry name" value="MEDIATOR OF RNA POLYMERASE II TRANSCRIPTION SUBUNIT 12"/>
    <property type="match status" value="1"/>
</dbReference>
<dbReference type="PANTHER" id="PTHR46007:SF2">
    <property type="entry name" value="MEDIATOR OF RNA POLYMERASE II TRANSCRIPTION SUBUNIT 12"/>
    <property type="match status" value="1"/>
</dbReference>
<dbReference type="Pfam" id="PF12145">
    <property type="entry name" value="Med12-LCEWAV"/>
    <property type="match status" value="1"/>
</dbReference>
<dbReference type="Pfam" id="PF12144">
    <property type="entry name" value="Med12-PQL"/>
    <property type="match status" value="1"/>
</dbReference>
<reference key="1">
    <citation type="journal article" date="2003" name="Mol. Biol. Evol.">
        <title>Gene diversity patterns at 10 X-chromosomal loci in humans and chimpanzees.</title>
        <authorList>
            <person name="Kitano T."/>
            <person name="Schwarz C."/>
            <person name="Nickel B."/>
            <person name="Paeaebo S."/>
        </authorList>
    </citation>
    <scope>NUCLEOTIDE SEQUENCE [MRNA]</scope>
</reference>
<sequence length="2027" mass="226338">MRAAWLIKMTCAYYAAISETKVKKRHVDPFMEWTQIITKYLWEQLQKMAEYYRPGPAGSGGCGSTIGPLPHDVEVAIRQWDYTEKLAMFMFQDGMLDRHEFLTWVLECFEKIRPGEDELLKLLLPLLLRYSGEFVQSAYLSRRLAYFCTRRLALQLDGVSSHSSHVISAQSTSTLPTTPAPQPPTSSTPSTPFSDLLMCPQHRPLVFGLSCILQTILLCCPSALVWHYSLTDSRIKTGSPLDHLPIAPSNLPMPEGNSAFTQQVRAKLREIEQQIKERGQAVEVRWSFDKCQEATAGFTIGRVLHTLEVLDSHSFERSDFSNSLDSLCNRIFGLGPSKDGHEISSDDDAVVSLLCEWAVSCKRSGRHRAMVVAKLLEKRQAEIEAERCGESEAADEKGSIASGSLSAPSAPIFQDVLLQFLDTQAPMLTDPRSENERVEFFNLVLLFCELIRHDVFSHNMYTCTLISRGDLAFGAPGPRPPSPFDDPADDAEHKEAEGSSSSKLEDPGLSESMDIDPSSSVLFEDMEKPDFSLFSPTMPCEGKGSPSPEKPDVEKEVKPPPKEKIEGTLGILYDQPRHVQYATHFPIPQEESCSHECNQRLVVLFGVGKQRDDARHAIKKITKDILKVLNRKGTAETDQLAPIVPLNPGDLTFLGGEDGQKRRRNRPEAFPTAEDIFAKFQHLSHYDQHQVTAQVSRNVLEQITSFALGMSYHLPLVQHVQFIFDLMEYSLSISGLIDFAIQLLNELSVVEAELLLKSSDLVGSYTTSLCLCIVAVLRHYHACLILNQDQMAQVFEGLCGVVKHGMNRSDGSSAERCILAYLYDLYTSCSHLKNKFGELFSDFCSKVKNTIYCNVEPSESNMRWAPEFMIDTLENPAAHTFTYTGLGKSLSENPANRYSFVCNALMHVCVGHHDPDRVNDIAILCAELTGYCKSLSAEWLGVLKALCCSSNNGTCGFNDLLCNVDVSDLSFHDSLATFVAILIARQCLLLEDLIRCAAIPSLLNAACSEQDSEPGARLTCRILLHLFKTPQLNPCQSDGNKPTVGIRSSCDRHLLAASQNRIVDGAVFAVLKAVFVLGDAELKGSGFTVTGGTEELPEEEGGGGSGGRRQGGRNISVETASLDVYAKYVLRSICQQEWVGERCLKSLCEDSNDLQDPVLSSAQAQRLMQLICYPHRLLDNEDGENPQRQRIKRILQNLDQWTMRQSSLELQLMIKQTPNNEMNSLLENIAKATIEVFQQSAETGSSSGSTASNMPSSSKTKPVLSSLERSGVWLVAPLIAKLPTSVQGHVLKAAGEELEKGQHLGSSSRKERDRQKQKSMSLLSQQPFLSLVLTCLKGQDEQREGLLTSLYSQVHQIVNNWRDDQYLDDCKPKQLMHEALKLRLNLVGGMFDTVQRSTQQTTEWAMLLLEIIISGTVDMQSNNELFTTVLDMLSVLINGTLAADMSSISQGSMEENKRAYMNLAKKLQKELGERQSDSLEKVRQLLPLPKQTRDVITCEPQGSLIDTKGNKIAGFDSIFKKEGLQVSTKQKISPWDLFEGLKPSAPLSWGWFGTVRVDRRVARGEEQQRLLLYHTHLRPRPRAYYLEPLPLPPEDEEPPAPTLLEPEKKAPEPPKTDKPGAAPPSTEERKKKSTKGKKRSQPATKTEDYGMGPGRSGPYGVTVPPDLLHHPNPGSITHLNYRQGSIGLYTQNQPLPAGGPRVDPYRPVRLPMQKLPTRPTYPGVLPTTMTGVMGLEPSSYKTSVYRQQQPAVPQGQRLRQQLQAKIQSQGMLGQSSVHQMTPSSSYGLQTSQGYTPYVSHVGLQQHTGPAGTMVPPSYSSQPYQSTHPSTNPTLVDPTRHLQQRPSGYVHQQAPTYGHGLTSTQRFSHQTLQQTPMISTMTPMSAQGVQAGVRSTAILPEQQQQQQQQQQQQQQQQQQQQQQQQQQYHIRQQQQQQILRQQQQQQQQQQQQQQQQQQQQQQQQQQHQQQQQQQAAPPQPQPQSQPQFQRQGLQQTQQQQQTAALVRQLQQQLSNTQPQPSTNIFGRY</sequence>
<gene>
    <name type="primary">MED12</name>
    <name type="synonym">TNRC11</name>
</gene>
<accession>Q7YQK8</accession>
<protein>
    <recommendedName>
        <fullName>Mediator of RNA polymerase II transcription subunit 12</fullName>
    </recommendedName>
    <alternativeName>
        <fullName>Mediator complex subunit 12</fullName>
    </alternativeName>
    <alternativeName>
        <fullName>Trinucleotide repeat-containing gene 11 protein</fullName>
    </alternativeName>
</protein>
<evidence type="ECO:0000250" key="1"/>
<evidence type="ECO:0000250" key="2">
    <source>
        <dbReference type="UniProtKB" id="A2AGH6"/>
    </source>
</evidence>
<evidence type="ECO:0000250" key="3">
    <source>
        <dbReference type="UniProtKB" id="Q93074"/>
    </source>
</evidence>
<evidence type="ECO:0000256" key="4">
    <source>
        <dbReference type="SAM" id="MobiDB-lite"/>
    </source>
</evidence>
<evidence type="ECO:0000305" key="5"/>
<keyword id="KW-0007">Acetylation</keyword>
<keyword id="KW-0010">Activator</keyword>
<keyword id="KW-0488">Methylation</keyword>
<keyword id="KW-0539">Nucleus</keyword>
<keyword id="KW-0597">Phosphoprotein</keyword>
<keyword id="KW-1185">Reference proteome</keyword>
<keyword id="KW-0678">Repressor</keyword>
<keyword id="KW-0804">Transcription</keyword>
<keyword id="KW-0805">Transcription regulation</keyword>
<proteinExistence type="evidence at transcript level"/>
<organism>
    <name type="scientific">Pan troglodytes</name>
    <name type="common">Chimpanzee</name>
    <dbReference type="NCBI Taxonomy" id="9598"/>
    <lineage>
        <taxon>Eukaryota</taxon>
        <taxon>Metazoa</taxon>
        <taxon>Chordata</taxon>
        <taxon>Craniata</taxon>
        <taxon>Vertebrata</taxon>
        <taxon>Euteleostomi</taxon>
        <taxon>Mammalia</taxon>
        <taxon>Eutheria</taxon>
        <taxon>Euarchontoglires</taxon>
        <taxon>Primates</taxon>
        <taxon>Haplorrhini</taxon>
        <taxon>Catarrhini</taxon>
        <taxon>Hominidae</taxon>
        <taxon>Pan</taxon>
    </lineage>
</organism>
<name>MED12_PANTR</name>